<comment type="function">
    <text evidence="1 4 5">Probable cyclase; part of the gene cluster that mediates the biosynthesis of ochratoxin A (OTA), a mycotoxin composed of a chlorinated type I polyketide dihydroisocoumarin moiety linked to L-phenylalanine, and demonstrated to have nephrotoxic, immunotoxic, genotoxic, neurotoxic, and teratogenic properties (PubMed:33391201). OtaY is probably involved in the polyketide cyclization (Probable) (PubMed:33391201). The pathway begins with the highly reducing polyketide synthase otaA that catalyzes the formation of the isocoumarin group during the initial stages of biosynthesis, starting from one acetate and 4 malonate units, to originate the characteristic pentaketide skeleton 7-methylmellein (7-MM) of the OTA molecule. The newly identified cyclase otaY might be involved in the polyketide cyclization reaction during the initial steps of the OTA biosynthesis. 7-MM is then oxidized into 7-carboxymellein (also called ochratoxin beta) by the cytochrome P450 monooxygenase otaC. The NRPS encoded by the otaB gene is involved in the linking of phenylalanine to the dihydroisocoumarin ring. The reaction catalyzed by NRPS results in the production of ochratoxin B (OTB), which is the non-chlorinated analog of OTA and which subsequently serves as the substrate of the halogenase otaD for chlorination activity to form the final molecular structure of OTA, containing a chlorine atom in the C-5 position of the molecule (Probable) (PubMed:27667988, PubMed:33391201).</text>
</comment>
<comment type="pathway">
    <text evidence="5">Mycotoxin biosynthesis.</text>
</comment>
<comment type="similarity">
    <text evidence="3">Belongs to the aurE cyclase family.</text>
</comment>
<reference key="1">
    <citation type="journal article" date="2007" name="Nat. Biotechnol.">
        <title>Genome sequencing and analysis of the versatile cell factory Aspergillus niger CBS 513.88.</title>
        <authorList>
            <person name="Pel H.J."/>
            <person name="de Winde J.H."/>
            <person name="Archer D.B."/>
            <person name="Dyer P.S."/>
            <person name="Hofmann G."/>
            <person name="Schaap P.J."/>
            <person name="Turner G."/>
            <person name="de Vries R.P."/>
            <person name="Albang R."/>
            <person name="Albermann K."/>
            <person name="Andersen M.R."/>
            <person name="Bendtsen J.D."/>
            <person name="Benen J.A.E."/>
            <person name="van den Berg M."/>
            <person name="Breestraat S."/>
            <person name="Caddick M.X."/>
            <person name="Contreras R."/>
            <person name="Cornell M."/>
            <person name="Coutinho P.M."/>
            <person name="Danchin E.G.J."/>
            <person name="Debets A.J.M."/>
            <person name="Dekker P."/>
            <person name="van Dijck P.W.M."/>
            <person name="van Dijk A."/>
            <person name="Dijkhuizen L."/>
            <person name="Driessen A.J.M."/>
            <person name="d'Enfert C."/>
            <person name="Geysens S."/>
            <person name="Goosen C."/>
            <person name="Groot G.S.P."/>
            <person name="de Groot P.W.J."/>
            <person name="Guillemette T."/>
            <person name="Henrissat B."/>
            <person name="Herweijer M."/>
            <person name="van den Hombergh J.P.T.W."/>
            <person name="van den Hondel C.A.M.J.J."/>
            <person name="van der Heijden R.T.J.M."/>
            <person name="van der Kaaij R.M."/>
            <person name="Klis F.M."/>
            <person name="Kools H.J."/>
            <person name="Kubicek C.P."/>
            <person name="van Kuyk P.A."/>
            <person name="Lauber J."/>
            <person name="Lu X."/>
            <person name="van der Maarel M.J.E.C."/>
            <person name="Meulenberg R."/>
            <person name="Menke H."/>
            <person name="Mortimer M.A."/>
            <person name="Nielsen J."/>
            <person name="Oliver S.G."/>
            <person name="Olsthoorn M."/>
            <person name="Pal K."/>
            <person name="van Peij N.N.M.E."/>
            <person name="Ram A.F.J."/>
            <person name="Rinas U."/>
            <person name="Roubos J.A."/>
            <person name="Sagt C.M.J."/>
            <person name="Schmoll M."/>
            <person name="Sun J."/>
            <person name="Ussery D."/>
            <person name="Varga J."/>
            <person name="Vervecken W."/>
            <person name="van de Vondervoort P.J.J."/>
            <person name="Wedler H."/>
            <person name="Woesten H.A.B."/>
            <person name="Zeng A.-P."/>
            <person name="van Ooyen A.J.J."/>
            <person name="Visser J."/>
            <person name="Stam H."/>
        </authorList>
    </citation>
    <scope>NUCLEOTIDE SEQUENCE [LARGE SCALE GENOMIC DNA]</scope>
    <source>
        <strain>ATCC MYA-4892 / CBS 513.88 / FGSC A1513</strain>
    </source>
</reference>
<reference key="2">
    <citation type="journal article" date="2016" name="Front. Microbiol.">
        <title>Variation in fumonisin and ochratoxin production associated with differences in biosynthetic gene content in Aspergillus niger and A. welwitschiae isolates from multiple crop and geographic origins.</title>
        <authorList>
            <person name="Susca A."/>
            <person name="Proctor R.H."/>
            <person name="Morelli M."/>
            <person name="Haidukowski M."/>
            <person name="Gallo A."/>
            <person name="Logrieco A.F."/>
            <person name="Moretti A."/>
        </authorList>
    </citation>
    <scope>FUNCTION</scope>
    <scope>PATHWAY</scope>
</reference>
<reference key="3">
    <citation type="journal article" date="2020" name="Front. Microbiol.">
        <title>Comparative genomic analysis of ochratoxin A biosynthetic cluster in producing fungi: new evidence of a cyclase gene involvement.</title>
        <authorList>
            <person name="Ferrara M."/>
            <person name="Gallo A."/>
            <person name="Perrone G."/>
            <person name="Magista D."/>
            <person name="Baker S.E."/>
        </authorList>
    </citation>
    <scope>IDENTIFICATION</scope>
    <scope>FUNCTION</scope>
    <scope>PATHWAY</scope>
</reference>
<keyword id="KW-0413">Isomerase</keyword>
<keyword id="KW-1185">Reference proteome</keyword>
<name>OTAY_ASPNC</name>
<proteinExistence type="inferred from homology"/>
<organism>
    <name type="scientific">Aspergillus niger (strain ATCC MYA-4892 / CBS 513.88 / FGSC A1513)</name>
    <dbReference type="NCBI Taxonomy" id="425011"/>
    <lineage>
        <taxon>Eukaryota</taxon>
        <taxon>Fungi</taxon>
        <taxon>Dikarya</taxon>
        <taxon>Ascomycota</taxon>
        <taxon>Pezizomycotina</taxon>
        <taxon>Eurotiomycetes</taxon>
        <taxon>Eurotiomycetidae</taxon>
        <taxon>Eurotiales</taxon>
        <taxon>Aspergillaceae</taxon>
        <taxon>Aspergillus</taxon>
        <taxon>Aspergillus subgen. Circumdati</taxon>
    </lineage>
</organism>
<accession>P0DUR9</accession>
<dbReference type="EC" id="5.-.-.-" evidence="5"/>
<dbReference type="EMBL" id="AM270352">
    <property type="status" value="NOT_ANNOTATED_CDS"/>
    <property type="molecule type" value="Genomic_DNA"/>
</dbReference>
<dbReference type="SMR" id="P0DUR9"/>
<dbReference type="Proteomes" id="UP000006706">
    <property type="component" value="Chromosome 3R"/>
</dbReference>
<dbReference type="GO" id="GO:0016853">
    <property type="term" value="F:isomerase activity"/>
    <property type="evidence" value="ECO:0007669"/>
    <property type="project" value="UniProtKB-KW"/>
</dbReference>
<dbReference type="GO" id="GO:1900818">
    <property type="term" value="P:ochratoxin A biosynthetic process"/>
    <property type="evidence" value="ECO:0000250"/>
    <property type="project" value="GO_Central"/>
</dbReference>
<dbReference type="Gene3D" id="3.10.450.50">
    <property type="match status" value="1"/>
</dbReference>
<dbReference type="InterPro" id="IPR032710">
    <property type="entry name" value="NTF2-like_dom_sf"/>
</dbReference>
<dbReference type="InterPro" id="IPR037401">
    <property type="entry name" value="SnoaL-like"/>
</dbReference>
<dbReference type="Pfam" id="PF12680">
    <property type="entry name" value="SnoaL_2"/>
    <property type="match status" value="1"/>
</dbReference>
<dbReference type="SUPFAM" id="SSF54427">
    <property type="entry name" value="NTF2-like"/>
    <property type="match status" value="1"/>
</dbReference>
<feature type="chain" id="PRO_0000453470" description="Probable cyclase otaY">
    <location>
        <begin position="1"/>
        <end position="119"/>
    </location>
</feature>
<evidence type="ECO:0000269" key="1">
    <source>
    </source>
</evidence>
<evidence type="ECO:0000303" key="2">
    <source>
    </source>
</evidence>
<evidence type="ECO:0000305" key="3"/>
<evidence type="ECO:0000305" key="4">
    <source>
    </source>
</evidence>
<evidence type="ECO:0000305" key="5">
    <source>
    </source>
</evidence>
<sequence length="119" mass="13700">MDLKSRAETFLTTIVNRRETASIEHYLHPDAQFKHNDLPSMSTAELLAFWPQVLDESPDFRVQILATIAEGLRVWVYSRVEGRLGKGVMDDVHMLEFDGNGLLIRSRGIQREVVEEMEK</sequence>
<protein>
    <recommendedName>
        <fullName evidence="2">Probable cyclase otaY</fullName>
        <ecNumber evidence="5">5.-.-.-</ecNumber>
    </recommendedName>
    <alternativeName>
        <fullName evidence="2">Ochratoxin A biosynthesis cluster protein Y</fullName>
    </alternativeName>
</protein>